<comment type="function">
    <text evidence="2">Component of the ubiquinol-cytochrome c reductase complex (complex III or cytochrome b-c1 complex) that is part of the mitochondrial respiratory chain. The b-c1 complex mediates electron transfer from ubiquinol to cytochrome c. Contributes to the generation of a proton gradient across the mitochondrial membrane that is then used for ATP synthesis.</text>
</comment>
<comment type="cofactor">
    <cofactor evidence="2">
        <name>heme b</name>
        <dbReference type="ChEBI" id="CHEBI:60344"/>
    </cofactor>
    <text evidence="2">Binds 2 heme b groups non-covalently.</text>
</comment>
<comment type="subunit">
    <text evidence="2">The cytochrome bc1 complex contains 11 subunits: 3 respiratory subunits (MT-CYB, CYC1 and UQCRFS1), 2 core proteins (UQCRC1 and UQCRC2) and 6 low-molecular weight proteins (UQCRH/QCR6, UQCRB/QCR7, UQCRQ/QCR8, UQCR10/QCR9, UQCR11/QCR10 and a cleavage product of UQCRFS1). This cytochrome bc1 complex then forms a dimer.</text>
</comment>
<comment type="subcellular location">
    <subcellularLocation>
        <location evidence="2">Mitochondrion inner membrane</location>
        <topology evidence="2">Multi-pass membrane protein</topology>
    </subcellularLocation>
</comment>
<comment type="miscellaneous">
    <text evidence="1">Heme 1 (or BL or b562) is low-potential and absorbs at about 562 nm, and heme 2 (or BH or b566) is high-potential and absorbs at about 566 nm.</text>
</comment>
<comment type="similarity">
    <text evidence="3 4">Belongs to the cytochrome b family.</text>
</comment>
<comment type="caution">
    <text evidence="2">The full-length protein contains only eight transmembrane helices, not nine as predicted by bioinformatics tools.</text>
</comment>
<feature type="chain" id="PRO_0000254679" description="Cytochrome b">
    <location>
        <begin position="1"/>
        <end position="379"/>
    </location>
</feature>
<feature type="transmembrane region" description="Helical" evidence="2">
    <location>
        <begin position="33"/>
        <end position="53"/>
    </location>
</feature>
<feature type="transmembrane region" description="Helical" evidence="2">
    <location>
        <begin position="77"/>
        <end position="98"/>
    </location>
</feature>
<feature type="transmembrane region" description="Helical" evidence="2">
    <location>
        <begin position="113"/>
        <end position="133"/>
    </location>
</feature>
<feature type="transmembrane region" description="Helical" evidence="2">
    <location>
        <begin position="178"/>
        <end position="198"/>
    </location>
</feature>
<feature type="transmembrane region" description="Helical" evidence="2">
    <location>
        <begin position="226"/>
        <end position="246"/>
    </location>
</feature>
<feature type="transmembrane region" description="Helical" evidence="2">
    <location>
        <begin position="288"/>
        <end position="308"/>
    </location>
</feature>
<feature type="transmembrane region" description="Helical" evidence="2">
    <location>
        <begin position="320"/>
        <end position="340"/>
    </location>
</feature>
<feature type="transmembrane region" description="Helical" evidence="2">
    <location>
        <begin position="347"/>
        <end position="367"/>
    </location>
</feature>
<feature type="binding site" description="axial binding residue" evidence="2">
    <location>
        <position position="83"/>
    </location>
    <ligand>
        <name>heme b</name>
        <dbReference type="ChEBI" id="CHEBI:60344"/>
        <label>b562</label>
    </ligand>
    <ligandPart>
        <name>Fe</name>
        <dbReference type="ChEBI" id="CHEBI:18248"/>
    </ligandPart>
</feature>
<feature type="binding site" description="axial binding residue" evidence="2">
    <location>
        <position position="97"/>
    </location>
    <ligand>
        <name>heme b</name>
        <dbReference type="ChEBI" id="CHEBI:60344"/>
        <label>b566</label>
    </ligand>
    <ligandPart>
        <name>Fe</name>
        <dbReference type="ChEBI" id="CHEBI:18248"/>
    </ligandPart>
</feature>
<feature type="binding site" description="axial binding residue" evidence="2">
    <location>
        <position position="182"/>
    </location>
    <ligand>
        <name>heme b</name>
        <dbReference type="ChEBI" id="CHEBI:60344"/>
        <label>b562</label>
    </ligand>
    <ligandPart>
        <name>Fe</name>
        <dbReference type="ChEBI" id="CHEBI:18248"/>
    </ligandPart>
</feature>
<feature type="binding site" description="axial binding residue" evidence="2">
    <location>
        <position position="196"/>
    </location>
    <ligand>
        <name>heme b</name>
        <dbReference type="ChEBI" id="CHEBI:60344"/>
        <label>b566</label>
    </ligand>
    <ligandPart>
        <name>Fe</name>
        <dbReference type="ChEBI" id="CHEBI:18248"/>
    </ligandPart>
</feature>
<feature type="binding site" evidence="2">
    <location>
        <position position="201"/>
    </location>
    <ligand>
        <name>a ubiquinone</name>
        <dbReference type="ChEBI" id="CHEBI:16389"/>
    </ligand>
</feature>
<organism>
    <name type="scientific">Chodsigoa parca</name>
    <name type="common">Lowe's shrew</name>
    <dbReference type="NCBI Taxonomy" id="268759"/>
    <lineage>
        <taxon>Eukaryota</taxon>
        <taxon>Metazoa</taxon>
        <taxon>Chordata</taxon>
        <taxon>Craniata</taxon>
        <taxon>Vertebrata</taxon>
        <taxon>Euteleostomi</taxon>
        <taxon>Mammalia</taxon>
        <taxon>Eutheria</taxon>
        <taxon>Laurasiatheria</taxon>
        <taxon>Eulipotyphla</taxon>
        <taxon>Soricidae</taxon>
        <taxon>Soricinae</taxon>
        <taxon>Chodsigoa</taxon>
    </lineage>
</organism>
<keyword id="KW-0249">Electron transport</keyword>
<keyword id="KW-0349">Heme</keyword>
<keyword id="KW-0408">Iron</keyword>
<keyword id="KW-0472">Membrane</keyword>
<keyword id="KW-0479">Metal-binding</keyword>
<keyword id="KW-0496">Mitochondrion</keyword>
<keyword id="KW-0999">Mitochondrion inner membrane</keyword>
<keyword id="KW-0679">Respiratory chain</keyword>
<keyword id="KW-0812">Transmembrane</keyword>
<keyword id="KW-1133">Transmembrane helix</keyword>
<keyword id="KW-0813">Transport</keyword>
<keyword id="KW-0830">Ubiquinone</keyword>
<name>CYB_CHOPC</name>
<geneLocation type="mitochondrion"/>
<dbReference type="EMBL" id="AB175105">
    <property type="protein sequence ID" value="BAE92670.1"/>
    <property type="molecule type" value="Genomic_DNA"/>
</dbReference>
<dbReference type="EMBL" id="AB175106">
    <property type="protein sequence ID" value="BAE92671.1"/>
    <property type="molecule type" value="Genomic_DNA"/>
</dbReference>
<dbReference type="SMR" id="Q1XIM5"/>
<dbReference type="GO" id="GO:0005743">
    <property type="term" value="C:mitochondrial inner membrane"/>
    <property type="evidence" value="ECO:0007669"/>
    <property type="project" value="UniProtKB-SubCell"/>
</dbReference>
<dbReference type="GO" id="GO:0045275">
    <property type="term" value="C:respiratory chain complex III"/>
    <property type="evidence" value="ECO:0007669"/>
    <property type="project" value="InterPro"/>
</dbReference>
<dbReference type="GO" id="GO:0046872">
    <property type="term" value="F:metal ion binding"/>
    <property type="evidence" value="ECO:0007669"/>
    <property type="project" value="UniProtKB-KW"/>
</dbReference>
<dbReference type="GO" id="GO:0008121">
    <property type="term" value="F:ubiquinol-cytochrome-c reductase activity"/>
    <property type="evidence" value="ECO:0007669"/>
    <property type="project" value="InterPro"/>
</dbReference>
<dbReference type="GO" id="GO:0006122">
    <property type="term" value="P:mitochondrial electron transport, ubiquinol to cytochrome c"/>
    <property type="evidence" value="ECO:0007669"/>
    <property type="project" value="TreeGrafter"/>
</dbReference>
<dbReference type="CDD" id="cd00290">
    <property type="entry name" value="cytochrome_b_C"/>
    <property type="match status" value="1"/>
</dbReference>
<dbReference type="CDD" id="cd00284">
    <property type="entry name" value="Cytochrome_b_N"/>
    <property type="match status" value="1"/>
</dbReference>
<dbReference type="FunFam" id="1.20.810.10:FF:000002">
    <property type="entry name" value="Cytochrome b"/>
    <property type="match status" value="1"/>
</dbReference>
<dbReference type="Gene3D" id="1.20.810.10">
    <property type="entry name" value="Cytochrome Bc1 Complex, Chain C"/>
    <property type="match status" value="1"/>
</dbReference>
<dbReference type="InterPro" id="IPR005798">
    <property type="entry name" value="Cyt_b/b6_C"/>
</dbReference>
<dbReference type="InterPro" id="IPR036150">
    <property type="entry name" value="Cyt_b/b6_C_sf"/>
</dbReference>
<dbReference type="InterPro" id="IPR005797">
    <property type="entry name" value="Cyt_b/b6_N"/>
</dbReference>
<dbReference type="InterPro" id="IPR027387">
    <property type="entry name" value="Cytb/b6-like_sf"/>
</dbReference>
<dbReference type="InterPro" id="IPR030689">
    <property type="entry name" value="Cytochrome_b"/>
</dbReference>
<dbReference type="InterPro" id="IPR048260">
    <property type="entry name" value="Cytochrome_b_C_euk/bac"/>
</dbReference>
<dbReference type="InterPro" id="IPR048259">
    <property type="entry name" value="Cytochrome_b_N_euk/bac"/>
</dbReference>
<dbReference type="InterPro" id="IPR016174">
    <property type="entry name" value="Di-haem_cyt_TM"/>
</dbReference>
<dbReference type="PANTHER" id="PTHR19271">
    <property type="entry name" value="CYTOCHROME B"/>
    <property type="match status" value="1"/>
</dbReference>
<dbReference type="PANTHER" id="PTHR19271:SF16">
    <property type="entry name" value="CYTOCHROME B"/>
    <property type="match status" value="1"/>
</dbReference>
<dbReference type="Pfam" id="PF00032">
    <property type="entry name" value="Cytochrom_B_C"/>
    <property type="match status" value="1"/>
</dbReference>
<dbReference type="Pfam" id="PF00033">
    <property type="entry name" value="Cytochrome_B"/>
    <property type="match status" value="1"/>
</dbReference>
<dbReference type="PIRSF" id="PIRSF038885">
    <property type="entry name" value="COB"/>
    <property type="match status" value="1"/>
</dbReference>
<dbReference type="SUPFAM" id="SSF81648">
    <property type="entry name" value="a domain/subunit of cytochrome bc1 complex (Ubiquinol-cytochrome c reductase)"/>
    <property type="match status" value="1"/>
</dbReference>
<dbReference type="SUPFAM" id="SSF81342">
    <property type="entry name" value="Transmembrane di-heme cytochromes"/>
    <property type="match status" value="1"/>
</dbReference>
<dbReference type="PROSITE" id="PS51003">
    <property type="entry name" value="CYTB_CTER"/>
    <property type="match status" value="1"/>
</dbReference>
<dbReference type="PROSITE" id="PS51002">
    <property type="entry name" value="CYTB_NTER"/>
    <property type="match status" value="1"/>
</dbReference>
<proteinExistence type="inferred from homology"/>
<accession>Q1XIM5</accession>
<evidence type="ECO:0000250" key="1"/>
<evidence type="ECO:0000250" key="2">
    <source>
        <dbReference type="UniProtKB" id="P00157"/>
    </source>
</evidence>
<evidence type="ECO:0000255" key="3">
    <source>
        <dbReference type="PROSITE-ProRule" id="PRU00967"/>
    </source>
</evidence>
<evidence type="ECO:0000255" key="4">
    <source>
        <dbReference type="PROSITE-ProRule" id="PRU00968"/>
    </source>
</evidence>
<reference key="1">
    <citation type="submission" date="2004-03" db="EMBL/GenBank/DDBJ databases">
        <title>Molecular phylogenetics of the Soricidae (Insectivora, Mammalia) based on mitochondrial cytochrome b gene sequences.</title>
        <authorList>
            <person name="Ohdachi S.D."/>
            <person name="Iwasa M.A."/>
            <person name="Abe H."/>
            <person name="Vogel P."/>
            <person name="Oshida T."/>
            <person name="Lin L.K."/>
            <person name="Hasegawa M."/>
        </authorList>
    </citation>
    <scope>NUCLEOTIDE SEQUENCE [GENOMIC DNA]</scope>
</reference>
<gene>
    <name type="primary">MT-CYB</name>
    <name type="synonym">COB</name>
    <name type="synonym">CYTB</name>
    <name type="synonym">MTCYB</name>
</gene>
<protein>
    <recommendedName>
        <fullName>Cytochrome b</fullName>
    </recommendedName>
    <alternativeName>
        <fullName>Complex III subunit 3</fullName>
    </alternativeName>
    <alternativeName>
        <fullName>Complex III subunit III</fullName>
    </alternativeName>
    <alternativeName>
        <fullName>Cytochrome b-c1 complex subunit 3</fullName>
    </alternativeName>
    <alternativeName>
        <fullName>Ubiquinol-cytochrome-c reductase complex cytochrome b subunit</fullName>
    </alternativeName>
</protein>
<sequence length="379" mass="42662">MTNIRKTHPLMKIINHSFIDLPAPSNISSWWNFGSLLGTCLIIQILTGLFLAMHYTSDTMTAFSSVTHICRDVNYGWLIRYLHANGASMFFICLFLHVGRGLYYGSYMYLETWNIGVLLLFAVMATAFMGYVLPWGQMSFWGATVITNLLSAIPYIGSDLVQWIWGGFSVDKATLTRFFAFHFILPFIVAALAGVHLLFLHETGSNNPSGLSSDADKIPFHPYYTIKDILGVLLLMLALTSLVLFSPDLLGDPDNYTPANPLNTPPHIKPEWYFLFAYAILRSIPNKLGGVLALVMSILVLAIIPLLHTSKQRSMMFRPFSQCMFWILVADLITLTWIGGQPVEHPFIIIGQLASILYFLLILILMPITSLLENNLLKW</sequence>